<accession>Q12Q05</accession>
<proteinExistence type="inferred from homology"/>
<gene>
    <name evidence="1" type="primary">dinB</name>
    <name type="ordered locus">Sden_1185</name>
</gene>
<comment type="function">
    <text evidence="1">Poorly processive, error-prone DNA polymerase involved in untargeted mutagenesis. Copies undamaged DNA at stalled replication forks, which arise in vivo from mismatched or misaligned primer ends. These misaligned primers can be extended by PolIV. Exhibits no 3'-5' exonuclease (proofreading) activity. May be involved in translesional synthesis, in conjunction with the beta clamp from PolIII.</text>
</comment>
<comment type="catalytic activity">
    <reaction evidence="1">
        <text>DNA(n) + a 2'-deoxyribonucleoside 5'-triphosphate = DNA(n+1) + diphosphate</text>
        <dbReference type="Rhea" id="RHEA:22508"/>
        <dbReference type="Rhea" id="RHEA-COMP:17339"/>
        <dbReference type="Rhea" id="RHEA-COMP:17340"/>
        <dbReference type="ChEBI" id="CHEBI:33019"/>
        <dbReference type="ChEBI" id="CHEBI:61560"/>
        <dbReference type="ChEBI" id="CHEBI:173112"/>
        <dbReference type="EC" id="2.7.7.7"/>
    </reaction>
</comment>
<comment type="cofactor">
    <cofactor evidence="1">
        <name>Mg(2+)</name>
        <dbReference type="ChEBI" id="CHEBI:18420"/>
    </cofactor>
    <text evidence="1">Binds 2 magnesium ions per subunit.</text>
</comment>
<comment type="subunit">
    <text evidence="1">Monomer.</text>
</comment>
<comment type="subcellular location">
    <subcellularLocation>
        <location evidence="1">Cytoplasm</location>
    </subcellularLocation>
</comment>
<comment type="similarity">
    <text evidence="1">Belongs to the DNA polymerase type-Y family.</text>
</comment>
<keyword id="KW-0963">Cytoplasm</keyword>
<keyword id="KW-0227">DNA damage</keyword>
<keyword id="KW-0234">DNA repair</keyword>
<keyword id="KW-0235">DNA replication</keyword>
<keyword id="KW-0238">DNA-binding</keyword>
<keyword id="KW-0239">DNA-directed DNA polymerase</keyword>
<keyword id="KW-0460">Magnesium</keyword>
<keyword id="KW-0479">Metal-binding</keyword>
<keyword id="KW-0515">Mutator protein</keyword>
<keyword id="KW-0548">Nucleotidyltransferase</keyword>
<keyword id="KW-1185">Reference proteome</keyword>
<keyword id="KW-0808">Transferase</keyword>
<reference key="1">
    <citation type="submission" date="2006-03" db="EMBL/GenBank/DDBJ databases">
        <title>Complete sequence of Shewanella denitrificans OS217.</title>
        <authorList>
            <consortium name="US DOE Joint Genome Institute"/>
            <person name="Copeland A."/>
            <person name="Lucas S."/>
            <person name="Lapidus A."/>
            <person name="Barry K."/>
            <person name="Detter J.C."/>
            <person name="Glavina del Rio T."/>
            <person name="Hammon N."/>
            <person name="Israni S."/>
            <person name="Dalin E."/>
            <person name="Tice H."/>
            <person name="Pitluck S."/>
            <person name="Brettin T."/>
            <person name="Bruce D."/>
            <person name="Han C."/>
            <person name="Tapia R."/>
            <person name="Gilna P."/>
            <person name="Kiss H."/>
            <person name="Schmutz J."/>
            <person name="Larimer F."/>
            <person name="Land M."/>
            <person name="Hauser L."/>
            <person name="Kyrpides N."/>
            <person name="Lykidis A."/>
            <person name="Richardson P."/>
        </authorList>
    </citation>
    <scope>NUCLEOTIDE SEQUENCE [LARGE SCALE GENOMIC DNA]</scope>
    <source>
        <strain>OS217 / ATCC BAA-1090 / DSM 15013</strain>
    </source>
</reference>
<organism>
    <name type="scientific">Shewanella denitrificans (strain OS217 / ATCC BAA-1090 / DSM 15013)</name>
    <dbReference type="NCBI Taxonomy" id="318161"/>
    <lineage>
        <taxon>Bacteria</taxon>
        <taxon>Pseudomonadati</taxon>
        <taxon>Pseudomonadota</taxon>
        <taxon>Gammaproteobacteria</taxon>
        <taxon>Alteromonadales</taxon>
        <taxon>Shewanellaceae</taxon>
        <taxon>Shewanella</taxon>
    </lineage>
</organism>
<feature type="chain" id="PRO_1000084929" description="DNA polymerase IV">
    <location>
        <begin position="1"/>
        <end position="358"/>
    </location>
</feature>
<feature type="domain" description="UmuC" evidence="1">
    <location>
        <begin position="4"/>
        <end position="185"/>
    </location>
</feature>
<feature type="active site" evidence="1">
    <location>
        <position position="104"/>
    </location>
</feature>
<feature type="binding site" evidence="1">
    <location>
        <position position="8"/>
    </location>
    <ligand>
        <name>Mg(2+)</name>
        <dbReference type="ChEBI" id="CHEBI:18420"/>
    </ligand>
</feature>
<feature type="binding site" evidence="1">
    <location>
        <position position="103"/>
    </location>
    <ligand>
        <name>Mg(2+)</name>
        <dbReference type="ChEBI" id="CHEBI:18420"/>
    </ligand>
</feature>
<feature type="site" description="Substrate discrimination" evidence="1">
    <location>
        <position position="13"/>
    </location>
</feature>
<name>DPO4_SHEDO</name>
<protein>
    <recommendedName>
        <fullName evidence="1">DNA polymerase IV</fullName>
        <shortName evidence="1">Pol IV</shortName>
        <ecNumber evidence="1">2.7.7.7</ecNumber>
    </recommendedName>
</protein>
<dbReference type="EC" id="2.7.7.7" evidence="1"/>
<dbReference type="EMBL" id="CP000302">
    <property type="protein sequence ID" value="ABE54471.1"/>
    <property type="molecule type" value="Genomic_DNA"/>
</dbReference>
<dbReference type="RefSeq" id="WP_011495631.1">
    <property type="nucleotide sequence ID" value="NC_007954.1"/>
</dbReference>
<dbReference type="SMR" id="Q12Q05"/>
<dbReference type="STRING" id="318161.Sden_1185"/>
<dbReference type="KEGG" id="sdn:Sden_1185"/>
<dbReference type="eggNOG" id="COG0389">
    <property type="taxonomic scope" value="Bacteria"/>
</dbReference>
<dbReference type="HOGENOM" id="CLU_012348_1_2_6"/>
<dbReference type="OrthoDB" id="9808813at2"/>
<dbReference type="Proteomes" id="UP000001982">
    <property type="component" value="Chromosome"/>
</dbReference>
<dbReference type="GO" id="GO:0005829">
    <property type="term" value="C:cytosol"/>
    <property type="evidence" value="ECO:0007669"/>
    <property type="project" value="TreeGrafter"/>
</dbReference>
<dbReference type="GO" id="GO:0003684">
    <property type="term" value="F:damaged DNA binding"/>
    <property type="evidence" value="ECO:0007669"/>
    <property type="project" value="InterPro"/>
</dbReference>
<dbReference type="GO" id="GO:0003887">
    <property type="term" value="F:DNA-directed DNA polymerase activity"/>
    <property type="evidence" value="ECO:0007669"/>
    <property type="project" value="UniProtKB-UniRule"/>
</dbReference>
<dbReference type="GO" id="GO:0000287">
    <property type="term" value="F:magnesium ion binding"/>
    <property type="evidence" value="ECO:0007669"/>
    <property type="project" value="UniProtKB-UniRule"/>
</dbReference>
<dbReference type="GO" id="GO:0006261">
    <property type="term" value="P:DNA-templated DNA replication"/>
    <property type="evidence" value="ECO:0007669"/>
    <property type="project" value="UniProtKB-UniRule"/>
</dbReference>
<dbReference type="GO" id="GO:0042276">
    <property type="term" value="P:error-prone translesion synthesis"/>
    <property type="evidence" value="ECO:0007669"/>
    <property type="project" value="TreeGrafter"/>
</dbReference>
<dbReference type="GO" id="GO:0009432">
    <property type="term" value="P:SOS response"/>
    <property type="evidence" value="ECO:0007669"/>
    <property type="project" value="TreeGrafter"/>
</dbReference>
<dbReference type="CDD" id="cd03586">
    <property type="entry name" value="PolY_Pol_IV_kappa"/>
    <property type="match status" value="1"/>
</dbReference>
<dbReference type="FunFam" id="1.10.150.20:FF:000019">
    <property type="entry name" value="DNA polymerase IV"/>
    <property type="match status" value="1"/>
</dbReference>
<dbReference type="FunFam" id="3.40.1170.60:FF:000001">
    <property type="entry name" value="DNA polymerase IV"/>
    <property type="match status" value="1"/>
</dbReference>
<dbReference type="Gene3D" id="3.30.70.270">
    <property type="match status" value="1"/>
</dbReference>
<dbReference type="Gene3D" id="3.40.1170.60">
    <property type="match status" value="1"/>
</dbReference>
<dbReference type="Gene3D" id="1.10.150.20">
    <property type="entry name" value="5' to 3' exonuclease, C-terminal subdomain"/>
    <property type="match status" value="1"/>
</dbReference>
<dbReference type="Gene3D" id="3.30.1490.100">
    <property type="entry name" value="DNA polymerase, Y-family, little finger domain"/>
    <property type="match status" value="1"/>
</dbReference>
<dbReference type="HAMAP" id="MF_01113">
    <property type="entry name" value="DNApol_IV"/>
    <property type="match status" value="1"/>
</dbReference>
<dbReference type="InterPro" id="IPR043502">
    <property type="entry name" value="DNA/RNA_pol_sf"/>
</dbReference>
<dbReference type="InterPro" id="IPR036775">
    <property type="entry name" value="DNA_pol_Y-fam_lit_finger_sf"/>
</dbReference>
<dbReference type="InterPro" id="IPR017961">
    <property type="entry name" value="DNA_pol_Y-fam_little_finger"/>
</dbReference>
<dbReference type="InterPro" id="IPR050116">
    <property type="entry name" value="DNA_polymerase-Y"/>
</dbReference>
<dbReference type="InterPro" id="IPR022880">
    <property type="entry name" value="DNApol_IV"/>
</dbReference>
<dbReference type="InterPro" id="IPR053848">
    <property type="entry name" value="IMS_HHH_1"/>
</dbReference>
<dbReference type="InterPro" id="IPR043128">
    <property type="entry name" value="Rev_trsase/Diguanyl_cyclase"/>
</dbReference>
<dbReference type="InterPro" id="IPR001126">
    <property type="entry name" value="UmuC"/>
</dbReference>
<dbReference type="NCBIfam" id="NF002677">
    <property type="entry name" value="PRK02406.1"/>
    <property type="match status" value="1"/>
</dbReference>
<dbReference type="PANTHER" id="PTHR11076:SF33">
    <property type="entry name" value="DNA POLYMERASE KAPPA"/>
    <property type="match status" value="1"/>
</dbReference>
<dbReference type="PANTHER" id="PTHR11076">
    <property type="entry name" value="DNA REPAIR POLYMERASE UMUC / TRANSFERASE FAMILY MEMBER"/>
    <property type="match status" value="1"/>
</dbReference>
<dbReference type="Pfam" id="PF00817">
    <property type="entry name" value="IMS"/>
    <property type="match status" value="1"/>
</dbReference>
<dbReference type="Pfam" id="PF11799">
    <property type="entry name" value="IMS_C"/>
    <property type="match status" value="1"/>
</dbReference>
<dbReference type="Pfam" id="PF21999">
    <property type="entry name" value="IMS_HHH_1"/>
    <property type="match status" value="1"/>
</dbReference>
<dbReference type="SUPFAM" id="SSF56672">
    <property type="entry name" value="DNA/RNA polymerases"/>
    <property type="match status" value="1"/>
</dbReference>
<dbReference type="SUPFAM" id="SSF100879">
    <property type="entry name" value="Lesion bypass DNA polymerase (Y-family), little finger domain"/>
    <property type="match status" value="1"/>
</dbReference>
<dbReference type="PROSITE" id="PS50173">
    <property type="entry name" value="UMUC"/>
    <property type="match status" value="1"/>
</dbReference>
<sequence>MRKIIHIDMDCYFAAVEMRDFPEFKGKPLAVGGRSDRRGVISTCNYEARKFGVRSAMSSHKALQLCPDLVLVPGRMDVYKSVSAQIRSVFARYTDIIEPLSLDEAYLDVTDSPHCKGSATLMAKAIREEIFELTGLTASAGIAPIKFLAKIASDLNKPNGQYLITPERIPAFVKDLPLIKIPGVGKVTAAKLEALGLLNCQDVQQYPKDKLIHAFGKFGVVLIDRAHGIDPRALSMDRLRKSVGVETTLAQDIYSLEQCHQILPGLIQELGSRCAKSAKQRQIHKQVVKLKFSDFKQTTIEHRSDELNINLFYELLSQALARSQGRGIRLLGVSVGLSDNQVNEHAPSFYGAQLDLGL</sequence>
<evidence type="ECO:0000255" key="1">
    <source>
        <dbReference type="HAMAP-Rule" id="MF_01113"/>
    </source>
</evidence>